<evidence type="ECO:0000255" key="1">
    <source>
        <dbReference type="HAMAP-Rule" id="MF_01173"/>
    </source>
</evidence>
<keyword id="KW-0032">Aminotransferase</keyword>
<keyword id="KW-0056">Arginine metabolism</keyword>
<keyword id="KW-0663">Pyridoxal phosphate</keyword>
<keyword id="KW-0808">Transferase</keyword>
<reference key="1">
    <citation type="submission" date="2008-02" db="EMBL/GenBank/DDBJ databases">
        <title>Complete sequence of Escherichia coli C str. ATCC 8739.</title>
        <authorList>
            <person name="Copeland A."/>
            <person name="Lucas S."/>
            <person name="Lapidus A."/>
            <person name="Glavina del Rio T."/>
            <person name="Dalin E."/>
            <person name="Tice H."/>
            <person name="Bruce D."/>
            <person name="Goodwin L."/>
            <person name="Pitluck S."/>
            <person name="Kiss H."/>
            <person name="Brettin T."/>
            <person name="Detter J.C."/>
            <person name="Han C."/>
            <person name="Kuske C.R."/>
            <person name="Schmutz J."/>
            <person name="Larimer F."/>
            <person name="Land M."/>
            <person name="Hauser L."/>
            <person name="Kyrpides N."/>
            <person name="Mikhailova N."/>
            <person name="Ingram L."/>
            <person name="Richardson P."/>
        </authorList>
    </citation>
    <scope>NUCLEOTIDE SEQUENCE [LARGE SCALE GENOMIC DNA]</scope>
    <source>
        <strain>ATCC 8739 / DSM 1576 / NBRC 3972 / NCIMB 8545 / WDCM 00012 / Crooks</strain>
    </source>
</reference>
<sequence>MSQPITRENFDEWMIPVYAPAPFIPVRGEGSRLWDQQGKEYIDFAGGIAVNALGHAHPELREALNEQASKFWHTGNGYTNEPVLRLAKKLIDATFADRVFFCNSGAEANEAALKLARKFAHDRYGSHKSGIVAFKNAFHGRTLFTVSAGGQPAYSQDFAPLPADIRHAAYNDINSASALIDDSTCAVIVEPIQGEGGVVPASNAFLQGLRELCNRHNALLIFDEVQTGVGRTGELYAYMHYGVTPDLLTTAKALGGGFPVGALLATEECARVMTVGTHGTTYGGNPLASAVAGKVLELINTPEMLNGVKQRHDWFVERLNTINHRYGLFSEVRGLGLLIGCVLNADYAGQAKQISQEAAKAGVMVLIAGGNVVRFAPALNVSEEEVTTGLDRFAAACEHFVSRGSS</sequence>
<proteinExistence type="inferred from homology"/>
<gene>
    <name evidence="1" type="primary">astC</name>
    <name evidence="1" type="synonym">argM</name>
    <name type="ordered locus">EcolC_1884</name>
</gene>
<dbReference type="EC" id="2.6.1.81" evidence="1"/>
<dbReference type="EMBL" id="CP000946">
    <property type="protein sequence ID" value="ACA77532.1"/>
    <property type="molecule type" value="Genomic_DNA"/>
</dbReference>
<dbReference type="RefSeq" id="WP_000081983.1">
    <property type="nucleotide sequence ID" value="NZ_MTFT01000006.1"/>
</dbReference>
<dbReference type="SMR" id="B1IPI2"/>
<dbReference type="GeneID" id="75203054"/>
<dbReference type="KEGG" id="ecl:EcolC_1884"/>
<dbReference type="HOGENOM" id="CLU_016922_10_1_6"/>
<dbReference type="UniPathway" id="UPA00185">
    <property type="reaction ID" value="UER00281"/>
</dbReference>
<dbReference type="GO" id="GO:0042802">
    <property type="term" value="F:identical protein binding"/>
    <property type="evidence" value="ECO:0007669"/>
    <property type="project" value="TreeGrafter"/>
</dbReference>
<dbReference type="GO" id="GO:0030170">
    <property type="term" value="F:pyridoxal phosphate binding"/>
    <property type="evidence" value="ECO:0007669"/>
    <property type="project" value="UniProtKB-UniRule"/>
</dbReference>
<dbReference type="GO" id="GO:0043825">
    <property type="term" value="F:succinylornithine transaminase activity"/>
    <property type="evidence" value="ECO:0007669"/>
    <property type="project" value="UniProtKB-EC"/>
</dbReference>
<dbReference type="GO" id="GO:1901607">
    <property type="term" value="P:alpha-amino acid biosynthetic process"/>
    <property type="evidence" value="ECO:0007669"/>
    <property type="project" value="UniProtKB-ARBA"/>
</dbReference>
<dbReference type="GO" id="GO:0019544">
    <property type="term" value="P:arginine catabolic process to glutamate"/>
    <property type="evidence" value="ECO:0007669"/>
    <property type="project" value="UniProtKB-UniRule"/>
</dbReference>
<dbReference type="GO" id="GO:0019545">
    <property type="term" value="P:arginine catabolic process to succinate"/>
    <property type="evidence" value="ECO:0007669"/>
    <property type="project" value="UniProtKB-UniRule"/>
</dbReference>
<dbReference type="GO" id="GO:0006593">
    <property type="term" value="P:ornithine catabolic process"/>
    <property type="evidence" value="ECO:0007669"/>
    <property type="project" value="InterPro"/>
</dbReference>
<dbReference type="CDD" id="cd00610">
    <property type="entry name" value="OAT_like"/>
    <property type="match status" value="1"/>
</dbReference>
<dbReference type="FunFam" id="3.40.640.10:FF:000004">
    <property type="entry name" value="Acetylornithine aminotransferase"/>
    <property type="match status" value="1"/>
</dbReference>
<dbReference type="FunFam" id="3.90.1150.10:FF:000009">
    <property type="entry name" value="Succinylornithine transaminase"/>
    <property type="match status" value="1"/>
</dbReference>
<dbReference type="Gene3D" id="3.90.1150.10">
    <property type="entry name" value="Aspartate Aminotransferase, domain 1"/>
    <property type="match status" value="1"/>
</dbReference>
<dbReference type="Gene3D" id="3.40.640.10">
    <property type="entry name" value="Type I PLP-dependent aspartate aminotransferase-like (Major domain)"/>
    <property type="match status" value="1"/>
</dbReference>
<dbReference type="HAMAP" id="MF_01107">
    <property type="entry name" value="ArgD_aminotrans_3"/>
    <property type="match status" value="1"/>
</dbReference>
<dbReference type="HAMAP" id="MF_01173">
    <property type="entry name" value="AstC_aminotrans_3"/>
    <property type="match status" value="1"/>
</dbReference>
<dbReference type="InterPro" id="IPR017652">
    <property type="entry name" value="Ac/SucOrn_transaminase_bac"/>
</dbReference>
<dbReference type="InterPro" id="IPR004636">
    <property type="entry name" value="AcOrn/SuccOrn_fam"/>
</dbReference>
<dbReference type="InterPro" id="IPR005814">
    <property type="entry name" value="Aminotrans_3"/>
</dbReference>
<dbReference type="InterPro" id="IPR049704">
    <property type="entry name" value="Aminotrans_3_PPA_site"/>
</dbReference>
<dbReference type="InterPro" id="IPR050103">
    <property type="entry name" value="Class-III_PLP-dep_AT"/>
</dbReference>
<dbReference type="InterPro" id="IPR015424">
    <property type="entry name" value="PyrdxlP-dep_Trfase"/>
</dbReference>
<dbReference type="InterPro" id="IPR015421">
    <property type="entry name" value="PyrdxlP-dep_Trfase_major"/>
</dbReference>
<dbReference type="InterPro" id="IPR015422">
    <property type="entry name" value="PyrdxlP-dep_Trfase_small"/>
</dbReference>
<dbReference type="InterPro" id="IPR026330">
    <property type="entry name" value="SOAT"/>
</dbReference>
<dbReference type="NCBIfam" id="TIGR03246">
    <property type="entry name" value="arg_catab_astC"/>
    <property type="match status" value="1"/>
</dbReference>
<dbReference type="NCBIfam" id="TIGR00707">
    <property type="entry name" value="argD"/>
    <property type="match status" value="1"/>
</dbReference>
<dbReference type="NCBIfam" id="NF002325">
    <property type="entry name" value="PRK01278.1"/>
    <property type="match status" value="1"/>
</dbReference>
<dbReference type="NCBIfam" id="NF003468">
    <property type="entry name" value="PRK05093.1"/>
    <property type="match status" value="1"/>
</dbReference>
<dbReference type="NCBIfam" id="NF009047">
    <property type="entry name" value="PRK12381.1"/>
    <property type="match status" value="1"/>
</dbReference>
<dbReference type="PANTHER" id="PTHR11986">
    <property type="entry name" value="AMINOTRANSFERASE CLASS III"/>
    <property type="match status" value="1"/>
</dbReference>
<dbReference type="PANTHER" id="PTHR11986:SF113">
    <property type="entry name" value="SUCCINYLORNITHINE TRANSAMINASE"/>
    <property type="match status" value="1"/>
</dbReference>
<dbReference type="Pfam" id="PF00202">
    <property type="entry name" value="Aminotran_3"/>
    <property type="match status" value="1"/>
</dbReference>
<dbReference type="PIRSF" id="PIRSF000521">
    <property type="entry name" value="Transaminase_4ab_Lys_Orn"/>
    <property type="match status" value="1"/>
</dbReference>
<dbReference type="SUPFAM" id="SSF53383">
    <property type="entry name" value="PLP-dependent transferases"/>
    <property type="match status" value="1"/>
</dbReference>
<dbReference type="PROSITE" id="PS00600">
    <property type="entry name" value="AA_TRANSFER_CLASS_3"/>
    <property type="match status" value="1"/>
</dbReference>
<protein>
    <recommendedName>
        <fullName evidence="1">Succinylornithine transaminase</fullName>
        <ecNumber evidence="1">2.6.1.81</ecNumber>
    </recommendedName>
    <alternativeName>
        <fullName evidence="1">Succinylornithine aminotransferase</fullName>
    </alternativeName>
</protein>
<feature type="chain" id="PRO_1000164384" description="Succinylornithine transaminase">
    <location>
        <begin position="1"/>
        <end position="406"/>
    </location>
</feature>
<feature type="modified residue" description="N6-(pyridoxal phosphate)lysine" evidence="1">
    <location>
        <position position="252"/>
    </location>
</feature>
<organism>
    <name type="scientific">Escherichia coli (strain ATCC 8739 / DSM 1576 / NBRC 3972 / NCIMB 8545 / WDCM 00012 / Crooks)</name>
    <dbReference type="NCBI Taxonomy" id="481805"/>
    <lineage>
        <taxon>Bacteria</taxon>
        <taxon>Pseudomonadati</taxon>
        <taxon>Pseudomonadota</taxon>
        <taxon>Gammaproteobacteria</taxon>
        <taxon>Enterobacterales</taxon>
        <taxon>Enterobacteriaceae</taxon>
        <taxon>Escherichia</taxon>
    </lineage>
</organism>
<name>ASTC_ECOLC</name>
<comment type="function">
    <text evidence="1">Catalyzes the transamination of N(2)-succinylornithine and alpha-ketoglutarate into N(2)-succinylglutamate semialdehyde and glutamate. Can also act as an acetylornithine aminotransferase.</text>
</comment>
<comment type="catalytic activity">
    <reaction evidence="1">
        <text>N(2)-succinyl-L-ornithine + 2-oxoglutarate = N-succinyl-L-glutamate 5-semialdehyde + L-glutamate</text>
        <dbReference type="Rhea" id="RHEA:16953"/>
        <dbReference type="ChEBI" id="CHEBI:16810"/>
        <dbReference type="ChEBI" id="CHEBI:29985"/>
        <dbReference type="ChEBI" id="CHEBI:58514"/>
        <dbReference type="ChEBI" id="CHEBI:58520"/>
        <dbReference type="EC" id="2.6.1.81"/>
    </reaction>
</comment>
<comment type="cofactor">
    <cofactor evidence="1">
        <name>pyridoxal 5'-phosphate</name>
        <dbReference type="ChEBI" id="CHEBI:597326"/>
    </cofactor>
</comment>
<comment type="pathway">
    <text evidence="1">Amino-acid degradation; L-arginine degradation via AST pathway; L-glutamate and succinate from L-arginine: step 3/5.</text>
</comment>
<comment type="similarity">
    <text evidence="1">Belongs to the class-III pyridoxal-phosphate-dependent aminotransferase family. AstC subfamily.</text>
</comment>
<accession>B1IPI2</accession>